<gene>
    <name type="primary">cyp516B1</name>
    <name type="ORF">DDB_G0271778</name>
</gene>
<organism>
    <name type="scientific">Dictyostelium discoideum</name>
    <name type="common">Social amoeba</name>
    <dbReference type="NCBI Taxonomy" id="44689"/>
    <lineage>
        <taxon>Eukaryota</taxon>
        <taxon>Amoebozoa</taxon>
        <taxon>Evosea</taxon>
        <taxon>Eumycetozoa</taxon>
        <taxon>Dictyostelia</taxon>
        <taxon>Dictyosteliales</taxon>
        <taxon>Dictyosteliaceae</taxon>
        <taxon>Dictyostelium</taxon>
    </lineage>
</organism>
<reference key="1">
    <citation type="journal article" date="2002" name="Nature">
        <title>Sequence and analysis of chromosome 2 of Dictyostelium discoideum.</title>
        <authorList>
            <person name="Gloeckner G."/>
            <person name="Eichinger L."/>
            <person name="Szafranski K."/>
            <person name="Pachebat J.A."/>
            <person name="Bankier A.T."/>
            <person name="Dear P.H."/>
            <person name="Lehmann R."/>
            <person name="Baumgart C."/>
            <person name="Parra G."/>
            <person name="Abril J.F."/>
            <person name="Guigo R."/>
            <person name="Kumpf K."/>
            <person name="Tunggal B."/>
            <person name="Cox E.C."/>
            <person name="Quail M.A."/>
            <person name="Platzer M."/>
            <person name="Rosenthal A."/>
            <person name="Noegel A.A."/>
        </authorList>
    </citation>
    <scope>NUCLEOTIDE SEQUENCE [LARGE SCALE GENOMIC DNA]</scope>
    <source>
        <strain>AX4</strain>
    </source>
</reference>
<reference key="2">
    <citation type="journal article" date="2005" name="Nature">
        <title>The genome of the social amoeba Dictyostelium discoideum.</title>
        <authorList>
            <person name="Eichinger L."/>
            <person name="Pachebat J.A."/>
            <person name="Gloeckner G."/>
            <person name="Rajandream M.A."/>
            <person name="Sucgang R."/>
            <person name="Berriman M."/>
            <person name="Song J."/>
            <person name="Olsen R."/>
            <person name="Szafranski K."/>
            <person name="Xu Q."/>
            <person name="Tunggal B."/>
            <person name="Kummerfeld S."/>
            <person name="Madera M."/>
            <person name="Konfortov B.A."/>
            <person name="Rivero F."/>
            <person name="Bankier A.T."/>
            <person name="Lehmann R."/>
            <person name="Hamlin N."/>
            <person name="Davies R."/>
            <person name="Gaudet P."/>
            <person name="Fey P."/>
            <person name="Pilcher K."/>
            <person name="Chen G."/>
            <person name="Saunders D."/>
            <person name="Sodergren E.J."/>
            <person name="Davis P."/>
            <person name="Kerhornou A."/>
            <person name="Nie X."/>
            <person name="Hall N."/>
            <person name="Anjard C."/>
            <person name="Hemphill L."/>
            <person name="Bason N."/>
            <person name="Farbrother P."/>
            <person name="Desany B."/>
            <person name="Just E."/>
            <person name="Morio T."/>
            <person name="Rost R."/>
            <person name="Churcher C.M."/>
            <person name="Cooper J."/>
            <person name="Haydock S."/>
            <person name="van Driessche N."/>
            <person name="Cronin A."/>
            <person name="Goodhead I."/>
            <person name="Muzny D.M."/>
            <person name="Mourier T."/>
            <person name="Pain A."/>
            <person name="Lu M."/>
            <person name="Harper D."/>
            <person name="Lindsay R."/>
            <person name="Hauser H."/>
            <person name="James K.D."/>
            <person name="Quiles M."/>
            <person name="Madan Babu M."/>
            <person name="Saito T."/>
            <person name="Buchrieser C."/>
            <person name="Wardroper A."/>
            <person name="Felder M."/>
            <person name="Thangavelu M."/>
            <person name="Johnson D."/>
            <person name="Knights A."/>
            <person name="Loulseged H."/>
            <person name="Mungall K.L."/>
            <person name="Oliver K."/>
            <person name="Price C."/>
            <person name="Quail M.A."/>
            <person name="Urushihara H."/>
            <person name="Hernandez J."/>
            <person name="Rabbinowitsch E."/>
            <person name="Steffen D."/>
            <person name="Sanders M."/>
            <person name="Ma J."/>
            <person name="Kohara Y."/>
            <person name="Sharp S."/>
            <person name="Simmonds M.N."/>
            <person name="Spiegler S."/>
            <person name="Tivey A."/>
            <person name="Sugano S."/>
            <person name="White B."/>
            <person name="Walker D."/>
            <person name="Woodward J.R."/>
            <person name="Winckler T."/>
            <person name="Tanaka Y."/>
            <person name="Shaulsky G."/>
            <person name="Schleicher M."/>
            <person name="Weinstock G.M."/>
            <person name="Rosenthal A."/>
            <person name="Cox E.C."/>
            <person name="Chisholm R.L."/>
            <person name="Gibbs R.A."/>
            <person name="Loomis W.F."/>
            <person name="Platzer M."/>
            <person name="Kay R.R."/>
            <person name="Williams J.G."/>
            <person name="Dear P.H."/>
            <person name="Noegel A.A."/>
            <person name="Barrell B.G."/>
            <person name="Kuspa A."/>
        </authorList>
    </citation>
    <scope>NUCLEOTIDE SEQUENCE [LARGE SCALE GENOMIC DNA]</scope>
    <source>
        <strain>AX4</strain>
    </source>
</reference>
<protein>
    <recommendedName>
        <fullName>Probable cytochrome P450 516B1</fullName>
        <ecNumber>1.14.-.-</ecNumber>
    </recommendedName>
</protein>
<sequence>MYLILSLIIFLAYVAFHKKRTNGMPPGPFPLPIIGNLHQLGKSPYKSLKSFSDKYGGLTTIFLGSVPTVLISEPNILREIIIKNNDSIIDRYISDSGLIIGGERNLLFSKGSFWIKYRKIFSSAMTNARKFNIASRIEQQAISLNNYFGTYANSKQAINPHDYIRRYSLNGVIDYSFSDSVEYESDTHHIVIRAAEIMEEILATGNPHDYLPFLKPFYTKKRNTLAMAVGQVWDYCNDAITVHRKTLDHEKPRDLLDLILMEIEKSEEKQFYDDDSLSKCLTDLIVAGHETVAITLGWMILFLSNHQDVQQKVYDELINVVGKGNLPALVHRKDTSYLNACIQETMRIRTAAPLALPRIASEDIKVGGYTIPKGTQVMMSVYGMASDERYWKDPHIFNPERWLSSNHSTENGGGGGGVVGNSSQSEVFIPFGVGPRMCVGMGVAKDELYYCASQMFMNFKWSPVNDKPIDDEGVARIALEYKEYQVVLERRK</sequence>
<keyword id="KW-0349">Heme</keyword>
<keyword id="KW-0408">Iron</keyword>
<keyword id="KW-0472">Membrane</keyword>
<keyword id="KW-0479">Metal-binding</keyword>
<keyword id="KW-0503">Monooxygenase</keyword>
<keyword id="KW-0560">Oxidoreductase</keyword>
<keyword id="KW-1185">Reference proteome</keyword>
<keyword id="KW-0812">Transmembrane</keyword>
<keyword id="KW-1133">Transmembrane helix</keyword>
<evidence type="ECO:0000250" key="1"/>
<evidence type="ECO:0000255" key="2"/>
<evidence type="ECO:0000305" key="3"/>
<comment type="cofactor">
    <cofactor evidence="1">
        <name>heme</name>
        <dbReference type="ChEBI" id="CHEBI:30413"/>
    </cofactor>
</comment>
<comment type="subcellular location">
    <subcellularLocation>
        <location evidence="3">Membrane</location>
        <topology evidence="3">Single-pass membrane protein</topology>
    </subcellularLocation>
</comment>
<comment type="similarity">
    <text evidence="3">Belongs to the cytochrome P450 family.</text>
</comment>
<dbReference type="EC" id="1.14.-.-"/>
<dbReference type="EMBL" id="AAFI02000006">
    <property type="protein sequence ID" value="EAL71579.1"/>
    <property type="molecule type" value="Genomic_DNA"/>
</dbReference>
<dbReference type="RefSeq" id="XP_645528.1">
    <property type="nucleotide sequence ID" value="XM_640436.1"/>
</dbReference>
<dbReference type="SMR" id="Q55AJ4"/>
<dbReference type="FunCoup" id="Q55AJ4">
    <property type="interactions" value="7"/>
</dbReference>
<dbReference type="STRING" id="44689.Q55AJ4"/>
<dbReference type="PaxDb" id="44689-DDB0232991"/>
<dbReference type="EnsemblProtists" id="EAL71579">
    <property type="protein sequence ID" value="EAL71579"/>
    <property type="gene ID" value="DDB_G0271778"/>
</dbReference>
<dbReference type="GeneID" id="8618157"/>
<dbReference type="KEGG" id="ddi:DDB_G0271778"/>
<dbReference type="dictyBase" id="DDB_G0271778">
    <property type="gene designation" value="cyp516B1"/>
</dbReference>
<dbReference type="VEuPathDB" id="AmoebaDB:DDB_G0271778"/>
<dbReference type="eggNOG" id="KOG0156">
    <property type="taxonomic scope" value="Eukaryota"/>
</dbReference>
<dbReference type="HOGENOM" id="CLU_001570_4_0_1"/>
<dbReference type="InParanoid" id="Q55AJ4"/>
<dbReference type="OMA" id="DPRAYWQ"/>
<dbReference type="PhylomeDB" id="Q55AJ4"/>
<dbReference type="Reactome" id="R-DDI-211935">
    <property type="pathway name" value="Fatty acids"/>
</dbReference>
<dbReference type="Reactome" id="R-DDI-211945">
    <property type="pathway name" value="Phase I - Functionalization of compounds"/>
</dbReference>
<dbReference type="Reactome" id="R-DDI-211958">
    <property type="pathway name" value="Miscellaneous substrates"/>
</dbReference>
<dbReference type="Reactome" id="R-DDI-211981">
    <property type="pathway name" value="Xenobiotics"/>
</dbReference>
<dbReference type="Reactome" id="R-DDI-211999">
    <property type="pathway name" value="CYP2E1 reactions"/>
</dbReference>
<dbReference type="Reactome" id="R-DDI-2142670">
    <property type="pathway name" value="Synthesis of epoxy (EET) and dihydroxyeicosatrienoic acids (DHET)"/>
</dbReference>
<dbReference type="Reactome" id="R-DDI-2142816">
    <property type="pathway name" value="Synthesis of (16-20)-hydroxyeicosatetraenoic acids (HETE)"/>
</dbReference>
<dbReference type="Reactome" id="R-DDI-5423646">
    <property type="pathway name" value="Aflatoxin activation and detoxification"/>
</dbReference>
<dbReference type="Reactome" id="R-DDI-9027307">
    <property type="pathway name" value="Biosynthesis of maresin-like SPMs"/>
</dbReference>
<dbReference type="Reactome" id="R-DDI-9749641">
    <property type="pathway name" value="Aspirin ADME"/>
</dbReference>
<dbReference type="Reactome" id="R-DDI-9753281">
    <property type="pathway name" value="Paracetamol ADME"/>
</dbReference>
<dbReference type="PRO" id="PR:Q55AJ4"/>
<dbReference type="Proteomes" id="UP000002195">
    <property type="component" value="Chromosome 2"/>
</dbReference>
<dbReference type="GO" id="GO:0005737">
    <property type="term" value="C:cytoplasm"/>
    <property type="evidence" value="ECO:0000318"/>
    <property type="project" value="GO_Central"/>
</dbReference>
<dbReference type="GO" id="GO:0043231">
    <property type="term" value="C:intracellular membrane-bounded organelle"/>
    <property type="evidence" value="ECO:0000318"/>
    <property type="project" value="GO_Central"/>
</dbReference>
<dbReference type="GO" id="GO:0016020">
    <property type="term" value="C:membrane"/>
    <property type="evidence" value="ECO:0007669"/>
    <property type="project" value="UniProtKB-SubCell"/>
</dbReference>
<dbReference type="GO" id="GO:0020037">
    <property type="term" value="F:heme binding"/>
    <property type="evidence" value="ECO:0000318"/>
    <property type="project" value="GO_Central"/>
</dbReference>
<dbReference type="GO" id="GO:0005506">
    <property type="term" value="F:iron ion binding"/>
    <property type="evidence" value="ECO:0007669"/>
    <property type="project" value="InterPro"/>
</dbReference>
<dbReference type="GO" id="GO:0016712">
    <property type="term" value="F:oxidoreductase activity, acting on paired donors, with incorporation or reduction of molecular oxygen, reduced flavin or flavoprotein as one donor, and incorporation of one atom of oxygen"/>
    <property type="evidence" value="ECO:0000318"/>
    <property type="project" value="GO_Central"/>
</dbReference>
<dbReference type="GO" id="GO:0006082">
    <property type="term" value="P:organic acid metabolic process"/>
    <property type="evidence" value="ECO:0000318"/>
    <property type="project" value="GO_Central"/>
</dbReference>
<dbReference type="GO" id="GO:0006805">
    <property type="term" value="P:xenobiotic metabolic process"/>
    <property type="evidence" value="ECO:0000318"/>
    <property type="project" value="GO_Central"/>
</dbReference>
<dbReference type="CDD" id="cd20617">
    <property type="entry name" value="CYP1_2-like"/>
    <property type="match status" value="1"/>
</dbReference>
<dbReference type="FunFam" id="1.10.630.10:FF:000068">
    <property type="entry name" value="Probable cytochrome P450 508A2"/>
    <property type="match status" value="1"/>
</dbReference>
<dbReference type="Gene3D" id="1.10.630.10">
    <property type="entry name" value="Cytochrome P450"/>
    <property type="match status" value="1"/>
</dbReference>
<dbReference type="InterPro" id="IPR001128">
    <property type="entry name" value="Cyt_P450"/>
</dbReference>
<dbReference type="InterPro" id="IPR017972">
    <property type="entry name" value="Cyt_P450_CS"/>
</dbReference>
<dbReference type="InterPro" id="IPR002401">
    <property type="entry name" value="Cyt_P450_E_grp-I"/>
</dbReference>
<dbReference type="InterPro" id="IPR036396">
    <property type="entry name" value="Cyt_P450_sf"/>
</dbReference>
<dbReference type="PANTHER" id="PTHR24303:SF31">
    <property type="entry name" value="CYTOCHROME P450 307A1-RELATED"/>
    <property type="match status" value="1"/>
</dbReference>
<dbReference type="PANTHER" id="PTHR24303">
    <property type="entry name" value="HEME-BINDING MONOOXYGENASE FAMILY"/>
    <property type="match status" value="1"/>
</dbReference>
<dbReference type="Pfam" id="PF00067">
    <property type="entry name" value="p450"/>
    <property type="match status" value="1"/>
</dbReference>
<dbReference type="PRINTS" id="PR00463">
    <property type="entry name" value="EP450I"/>
</dbReference>
<dbReference type="PRINTS" id="PR00385">
    <property type="entry name" value="P450"/>
</dbReference>
<dbReference type="SUPFAM" id="SSF48264">
    <property type="entry name" value="Cytochrome P450"/>
    <property type="match status" value="1"/>
</dbReference>
<dbReference type="PROSITE" id="PS00086">
    <property type="entry name" value="CYTOCHROME_P450"/>
    <property type="match status" value="1"/>
</dbReference>
<feature type="chain" id="PRO_0000318826" description="Probable cytochrome P450 516B1">
    <location>
        <begin position="1"/>
        <end position="492"/>
    </location>
</feature>
<feature type="transmembrane region" description="Helical" evidence="2">
    <location>
        <begin position="1"/>
        <end position="17"/>
    </location>
</feature>
<feature type="binding site" description="axial binding residue" evidence="1">
    <location>
        <position position="438"/>
    </location>
    <ligand>
        <name>heme</name>
        <dbReference type="ChEBI" id="CHEBI:30413"/>
    </ligand>
    <ligandPart>
        <name>Fe</name>
        <dbReference type="ChEBI" id="CHEBI:18248"/>
    </ligandPart>
</feature>
<accession>Q55AJ4</accession>
<accession>Q86AF9</accession>
<name>C516B_DICDI</name>
<proteinExistence type="inferred from homology"/>